<sequence>MSEPASIALQKEIVRELEVAETFDAEREIERRVAFLAERLTSTGLRALVLGISGGVDSTTAGRLCQLAVERARAAGHEALFYAMRLPHGVQADEDDAQQALSFIRPDRVLTVDIKPASDAALDALLAADVAFRDPHHQDFVHGNIKARQRMIAQYAVAGAHGGLVVGTDHAAEAVSGFFTKFGDGAADVVPLTGLTKRRVRAVGDALGAPAALVRKVPTADLETLDPGKADEDALGVTYEEIDDFLEGKPVTEQVFETIVTRYRQTDHKRRLPIAP</sequence>
<comment type="function">
    <text evidence="1">Catalyzes the ATP-dependent amidation of deamido-NAD to form NAD. Uses ammonia as a nitrogen source.</text>
</comment>
<comment type="catalytic activity">
    <reaction evidence="1">
        <text>deamido-NAD(+) + NH4(+) + ATP = AMP + diphosphate + NAD(+) + H(+)</text>
        <dbReference type="Rhea" id="RHEA:21188"/>
        <dbReference type="ChEBI" id="CHEBI:15378"/>
        <dbReference type="ChEBI" id="CHEBI:28938"/>
        <dbReference type="ChEBI" id="CHEBI:30616"/>
        <dbReference type="ChEBI" id="CHEBI:33019"/>
        <dbReference type="ChEBI" id="CHEBI:57540"/>
        <dbReference type="ChEBI" id="CHEBI:58437"/>
        <dbReference type="ChEBI" id="CHEBI:456215"/>
        <dbReference type="EC" id="6.3.1.5"/>
    </reaction>
</comment>
<comment type="pathway">
    <text evidence="1">Cofactor biosynthesis; NAD(+) biosynthesis; NAD(+) from deamido-NAD(+) (ammonia route): step 1/1.</text>
</comment>
<comment type="subunit">
    <text evidence="1">Homodimer.</text>
</comment>
<comment type="similarity">
    <text evidence="1">Belongs to the NAD synthetase family.</text>
</comment>
<gene>
    <name evidence="1" type="primary">nadE</name>
    <name type="synonym">nadE2</name>
    <name type="ordered locus">SCO0506</name>
    <name type="ORF">SCF6.02</name>
</gene>
<organism>
    <name type="scientific">Streptomyces coelicolor (strain ATCC BAA-471 / A3(2) / M145)</name>
    <dbReference type="NCBI Taxonomy" id="100226"/>
    <lineage>
        <taxon>Bacteria</taxon>
        <taxon>Bacillati</taxon>
        <taxon>Actinomycetota</taxon>
        <taxon>Actinomycetes</taxon>
        <taxon>Kitasatosporales</taxon>
        <taxon>Streptomycetaceae</taxon>
        <taxon>Streptomyces</taxon>
        <taxon>Streptomyces albidoflavus group</taxon>
    </lineage>
</organism>
<dbReference type="EC" id="6.3.1.5" evidence="1"/>
<dbReference type="EMBL" id="AL939105">
    <property type="protein sequence ID" value="CAB58266.1"/>
    <property type="molecule type" value="Genomic_DNA"/>
</dbReference>
<dbReference type="RefSeq" id="NP_624822.1">
    <property type="nucleotide sequence ID" value="NC_003888.3"/>
</dbReference>
<dbReference type="RefSeq" id="WP_011027169.1">
    <property type="nucleotide sequence ID" value="NZ_VNID01000015.1"/>
</dbReference>
<dbReference type="SMR" id="Q9RJM5"/>
<dbReference type="STRING" id="100226.gene:17758089"/>
<dbReference type="PaxDb" id="100226-SCO0506"/>
<dbReference type="KEGG" id="sco:SCO0506"/>
<dbReference type="PATRIC" id="fig|100226.15.peg.486"/>
<dbReference type="eggNOG" id="COG0171">
    <property type="taxonomic scope" value="Bacteria"/>
</dbReference>
<dbReference type="HOGENOM" id="CLU_059327_3_0_11"/>
<dbReference type="InParanoid" id="Q9RJM5"/>
<dbReference type="OrthoDB" id="3266517at2"/>
<dbReference type="PhylomeDB" id="Q9RJM5"/>
<dbReference type="UniPathway" id="UPA00253">
    <property type="reaction ID" value="UER00333"/>
</dbReference>
<dbReference type="Proteomes" id="UP000001973">
    <property type="component" value="Chromosome"/>
</dbReference>
<dbReference type="GO" id="GO:0005737">
    <property type="term" value="C:cytoplasm"/>
    <property type="evidence" value="ECO:0000318"/>
    <property type="project" value="GO_Central"/>
</dbReference>
<dbReference type="GO" id="GO:0005524">
    <property type="term" value="F:ATP binding"/>
    <property type="evidence" value="ECO:0007669"/>
    <property type="project" value="UniProtKB-UniRule"/>
</dbReference>
<dbReference type="GO" id="GO:0004359">
    <property type="term" value="F:glutaminase activity"/>
    <property type="evidence" value="ECO:0007669"/>
    <property type="project" value="InterPro"/>
</dbReference>
<dbReference type="GO" id="GO:0046872">
    <property type="term" value="F:metal ion binding"/>
    <property type="evidence" value="ECO:0007669"/>
    <property type="project" value="UniProtKB-KW"/>
</dbReference>
<dbReference type="GO" id="GO:0003952">
    <property type="term" value="F:NAD+ synthase (glutamine-hydrolyzing) activity"/>
    <property type="evidence" value="ECO:0007669"/>
    <property type="project" value="InterPro"/>
</dbReference>
<dbReference type="GO" id="GO:0008795">
    <property type="term" value="F:NAD+ synthase activity"/>
    <property type="evidence" value="ECO:0007669"/>
    <property type="project" value="UniProtKB-UniRule"/>
</dbReference>
<dbReference type="GO" id="GO:0009435">
    <property type="term" value="P:NAD biosynthetic process"/>
    <property type="evidence" value="ECO:0000318"/>
    <property type="project" value="GO_Central"/>
</dbReference>
<dbReference type="CDD" id="cd00553">
    <property type="entry name" value="NAD_synthase"/>
    <property type="match status" value="1"/>
</dbReference>
<dbReference type="Gene3D" id="3.40.50.620">
    <property type="entry name" value="HUPs"/>
    <property type="match status" value="1"/>
</dbReference>
<dbReference type="HAMAP" id="MF_00193">
    <property type="entry name" value="NadE_ammonia_dep"/>
    <property type="match status" value="1"/>
</dbReference>
<dbReference type="InterPro" id="IPR022310">
    <property type="entry name" value="NAD/GMP_synthase"/>
</dbReference>
<dbReference type="InterPro" id="IPR003694">
    <property type="entry name" value="NAD_synthase"/>
</dbReference>
<dbReference type="InterPro" id="IPR022926">
    <property type="entry name" value="NH(3)-dep_NAD(+)_synth"/>
</dbReference>
<dbReference type="InterPro" id="IPR014729">
    <property type="entry name" value="Rossmann-like_a/b/a_fold"/>
</dbReference>
<dbReference type="NCBIfam" id="TIGR00552">
    <property type="entry name" value="nadE"/>
    <property type="match status" value="1"/>
</dbReference>
<dbReference type="NCBIfam" id="NF001979">
    <property type="entry name" value="PRK00768.1"/>
    <property type="match status" value="1"/>
</dbReference>
<dbReference type="PANTHER" id="PTHR23090">
    <property type="entry name" value="NH 3 /GLUTAMINE-DEPENDENT NAD + SYNTHETASE"/>
    <property type="match status" value="1"/>
</dbReference>
<dbReference type="PANTHER" id="PTHR23090:SF7">
    <property type="entry name" value="NH(3)-DEPENDENT NAD(+) SYNTHETASE"/>
    <property type="match status" value="1"/>
</dbReference>
<dbReference type="Pfam" id="PF02540">
    <property type="entry name" value="NAD_synthase"/>
    <property type="match status" value="1"/>
</dbReference>
<dbReference type="SUPFAM" id="SSF52402">
    <property type="entry name" value="Adenine nucleotide alpha hydrolases-like"/>
    <property type="match status" value="1"/>
</dbReference>
<name>NADE_STRCO</name>
<evidence type="ECO:0000255" key="1">
    <source>
        <dbReference type="HAMAP-Rule" id="MF_00193"/>
    </source>
</evidence>
<feature type="chain" id="PRO_0000152204" description="NH(3)-dependent NAD(+) synthetase">
    <location>
        <begin position="1"/>
        <end position="276"/>
    </location>
</feature>
<feature type="binding site" evidence="1">
    <location>
        <begin position="51"/>
        <end position="58"/>
    </location>
    <ligand>
        <name>ATP</name>
        <dbReference type="ChEBI" id="CHEBI:30616"/>
    </ligand>
</feature>
<feature type="binding site" evidence="1">
    <location>
        <position position="57"/>
    </location>
    <ligand>
        <name>Mg(2+)</name>
        <dbReference type="ChEBI" id="CHEBI:18420"/>
    </ligand>
</feature>
<feature type="binding site" evidence="1">
    <location>
        <position position="148"/>
    </location>
    <ligand>
        <name>deamido-NAD(+)</name>
        <dbReference type="ChEBI" id="CHEBI:58437"/>
    </ligand>
</feature>
<feature type="binding site" evidence="1">
    <location>
        <position position="168"/>
    </location>
    <ligand>
        <name>ATP</name>
        <dbReference type="ChEBI" id="CHEBI:30616"/>
    </ligand>
</feature>
<feature type="binding site" evidence="1">
    <location>
        <position position="173"/>
    </location>
    <ligand>
        <name>Mg(2+)</name>
        <dbReference type="ChEBI" id="CHEBI:18420"/>
    </ligand>
</feature>
<feature type="binding site" evidence="1">
    <location>
        <position position="181"/>
    </location>
    <ligand>
        <name>deamido-NAD(+)</name>
        <dbReference type="ChEBI" id="CHEBI:58437"/>
    </ligand>
</feature>
<feature type="binding site" evidence="1">
    <location>
        <position position="188"/>
    </location>
    <ligand>
        <name>deamido-NAD(+)</name>
        <dbReference type="ChEBI" id="CHEBI:58437"/>
    </ligand>
</feature>
<feature type="binding site" evidence="1">
    <location>
        <position position="197"/>
    </location>
    <ligand>
        <name>ATP</name>
        <dbReference type="ChEBI" id="CHEBI:30616"/>
    </ligand>
</feature>
<feature type="binding site" evidence="1">
    <location>
        <position position="219"/>
    </location>
    <ligand>
        <name>ATP</name>
        <dbReference type="ChEBI" id="CHEBI:30616"/>
    </ligand>
</feature>
<feature type="binding site" evidence="1">
    <location>
        <begin position="268"/>
        <end position="269"/>
    </location>
    <ligand>
        <name>deamido-NAD(+)</name>
        <dbReference type="ChEBI" id="CHEBI:58437"/>
    </ligand>
</feature>
<protein>
    <recommendedName>
        <fullName evidence="1">NH(3)-dependent NAD(+) synthetase</fullName>
        <ecNumber evidence="1">6.3.1.5</ecNumber>
    </recommendedName>
</protein>
<reference key="1">
    <citation type="journal article" date="2002" name="Nature">
        <title>Complete genome sequence of the model actinomycete Streptomyces coelicolor A3(2).</title>
        <authorList>
            <person name="Bentley S.D."/>
            <person name="Chater K.F."/>
            <person name="Cerdeno-Tarraga A.-M."/>
            <person name="Challis G.L."/>
            <person name="Thomson N.R."/>
            <person name="James K.D."/>
            <person name="Harris D.E."/>
            <person name="Quail M.A."/>
            <person name="Kieser H."/>
            <person name="Harper D."/>
            <person name="Bateman A."/>
            <person name="Brown S."/>
            <person name="Chandra G."/>
            <person name="Chen C.W."/>
            <person name="Collins M."/>
            <person name="Cronin A."/>
            <person name="Fraser A."/>
            <person name="Goble A."/>
            <person name="Hidalgo J."/>
            <person name="Hornsby T."/>
            <person name="Howarth S."/>
            <person name="Huang C.-H."/>
            <person name="Kieser T."/>
            <person name="Larke L."/>
            <person name="Murphy L.D."/>
            <person name="Oliver K."/>
            <person name="O'Neil S."/>
            <person name="Rabbinowitsch E."/>
            <person name="Rajandream M.A."/>
            <person name="Rutherford K.M."/>
            <person name="Rutter S."/>
            <person name="Seeger K."/>
            <person name="Saunders D."/>
            <person name="Sharp S."/>
            <person name="Squares R."/>
            <person name="Squares S."/>
            <person name="Taylor K."/>
            <person name="Warren T."/>
            <person name="Wietzorrek A."/>
            <person name="Woodward J.R."/>
            <person name="Barrell B.G."/>
            <person name="Parkhill J."/>
            <person name="Hopwood D.A."/>
        </authorList>
    </citation>
    <scope>NUCLEOTIDE SEQUENCE [LARGE SCALE GENOMIC DNA]</scope>
    <source>
        <strain>ATCC BAA-471 / A3(2) / M145</strain>
    </source>
</reference>
<keyword id="KW-0067">ATP-binding</keyword>
<keyword id="KW-0436">Ligase</keyword>
<keyword id="KW-0460">Magnesium</keyword>
<keyword id="KW-0479">Metal-binding</keyword>
<keyword id="KW-0520">NAD</keyword>
<keyword id="KW-0547">Nucleotide-binding</keyword>
<keyword id="KW-1185">Reference proteome</keyword>
<proteinExistence type="inferred from homology"/>
<accession>Q9RJM5</accession>